<reference key="1">
    <citation type="journal article" date="2011" name="J. Bacteriol.">
        <title>Genome sequence of Thermotoga sp. strain RQ2, a hyperthermophilic bacterium isolated from a geothermally heated region of the seafloor near Ribeira Quente, the Azores.</title>
        <authorList>
            <person name="Swithers K.S."/>
            <person name="DiPippo J.L."/>
            <person name="Bruce D.C."/>
            <person name="Detter C."/>
            <person name="Tapia R."/>
            <person name="Han S."/>
            <person name="Saunders E."/>
            <person name="Goodwin L.A."/>
            <person name="Han J."/>
            <person name="Woyke T."/>
            <person name="Pitluck S."/>
            <person name="Pennacchio L."/>
            <person name="Nolan M."/>
            <person name="Mikhailova N."/>
            <person name="Lykidis A."/>
            <person name="Land M.L."/>
            <person name="Brettin T."/>
            <person name="Stetter K.O."/>
            <person name="Nelson K.E."/>
            <person name="Gogarten J.P."/>
            <person name="Noll K.M."/>
        </authorList>
    </citation>
    <scope>NUCLEOTIDE SEQUENCE [LARGE SCALE GENOMIC DNA]</scope>
    <source>
        <strain>RQ2</strain>
    </source>
</reference>
<protein>
    <recommendedName>
        <fullName evidence="1">Ribonuclease HII</fullName>
        <shortName evidence="1">RNase HII</shortName>
        <ecNumber evidence="1">3.1.26.4</ecNumber>
    </recommendedName>
</protein>
<organism>
    <name type="scientific">Thermotoga sp. (strain RQ2)</name>
    <dbReference type="NCBI Taxonomy" id="126740"/>
    <lineage>
        <taxon>Bacteria</taxon>
        <taxon>Thermotogati</taxon>
        <taxon>Thermotogota</taxon>
        <taxon>Thermotogae</taxon>
        <taxon>Thermotogales</taxon>
        <taxon>Thermotogaceae</taxon>
        <taxon>Thermotoga</taxon>
    </lineage>
</organism>
<name>RNH2_THESQ</name>
<keyword id="KW-0963">Cytoplasm</keyword>
<keyword id="KW-0255">Endonuclease</keyword>
<keyword id="KW-0378">Hydrolase</keyword>
<keyword id="KW-0464">Manganese</keyword>
<keyword id="KW-0479">Metal-binding</keyword>
<keyword id="KW-0540">Nuclease</keyword>
<feature type="chain" id="PRO_1000091664" description="Ribonuclease HII">
    <location>
        <begin position="1"/>
        <end position="238"/>
    </location>
</feature>
<feature type="domain" description="RNase H type-2" evidence="2">
    <location>
        <begin position="12"/>
        <end position="197"/>
    </location>
</feature>
<feature type="binding site" evidence="1">
    <location>
        <position position="18"/>
    </location>
    <ligand>
        <name>a divalent metal cation</name>
        <dbReference type="ChEBI" id="CHEBI:60240"/>
    </ligand>
</feature>
<feature type="binding site" evidence="1">
    <location>
        <position position="19"/>
    </location>
    <ligand>
        <name>a divalent metal cation</name>
        <dbReference type="ChEBI" id="CHEBI:60240"/>
    </ligand>
</feature>
<feature type="binding site" evidence="1">
    <location>
        <position position="107"/>
    </location>
    <ligand>
        <name>a divalent metal cation</name>
        <dbReference type="ChEBI" id="CHEBI:60240"/>
    </ligand>
</feature>
<sequence>MGIDELYKKEFGIVAGVDEAGRGCLAGPVVAAAVVLEKEIEGINDSKQLSPAKRERLFDEIMGKAAVGIGIASPEEIDLHNIFNATKLAMNRALENLSVGPSFVLVDGKGIELRVPGTCLVKGDQKSKLIGAASIVAKVFRDRLMSEFHKMYPQFSFHKHKGYATKEHLNEIRKNGVLPIHRMSFEPVLELLTDDLLREFFEKGLISENRFEHIKNLLEAKKSVVFRKERTDHNLPLF</sequence>
<proteinExistence type="inferred from homology"/>
<accession>B1LC19</accession>
<gene>
    <name evidence="1" type="primary">rnhB</name>
    <name type="ordered locus">TRQ2_0012</name>
</gene>
<dbReference type="EC" id="3.1.26.4" evidence="1"/>
<dbReference type="EMBL" id="CP000969">
    <property type="protein sequence ID" value="ACB08374.1"/>
    <property type="molecule type" value="Genomic_DNA"/>
</dbReference>
<dbReference type="RefSeq" id="WP_011942719.1">
    <property type="nucleotide sequence ID" value="NC_010483.1"/>
</dbReference>
<dbReference type="SMR" id="B1LC19"/>
<dbReference type="KEGG" id="trq:TRQ2_0012"/>
<dbReference type="HOGENOM" id="CLU_036532_3_2_0"/>
<dbReference type="Proteomes" id="UP000001687">
    <property type="component" value="Chromosome"/>
</dbReference>
<dbReference type="GO" id="GO:0005737">
    <property type="term" value="C:cytoplasm"/>
    <property type="evidence" value="ECO:0007669"/>
    <property type="project" value="UniProtKB-SubCell"/>
</dbReference>
<dbReference type="GO" id="GO:0032299">
    <property type="term" value="C:ribonuclease H2 complex"/>
    <property type="evidence" value="ECO:0007669"/>
    <property type="project" value="TreeGrafter"/>
</dbReference>
<dbReference type="GO" id="GO:0030145">
    <property type="term" value="F:manganese ion binding"/>
    <property type="evidence" value="ECO:0007669"/>
    <property type="project" value="UniProtKB-UniRule"/>
</dbReference>
<dbReference type="GO" id="GO:0003723">
    <property type="term" value="F:RNA binding"/>
    <property type="evidence" value="ECO:0007669"/>
    <property type="project" value="InterPro"/>
</dbReference>
<dbReference type="GO" id="GO:0004523">
    <property type="term" value="F:RNA-DNA hybrid ribonuclease activity"/>
    <property type="evidence" value="ECO:0007669"/>
    <property type="project" value="UniProtKB-UniRule"/>
</dbReference>
<dbReference type="GO" id="GO:0043137">
    <property type="term" value="P:DNA replication, removal of RNA primer"/>
    <property type="evidence" value="ECO:0007669"/>
    <property type="project" value="TreeGrafter"/>
</dbReference>
<dbReference type="GO" id="GO:0006298">
    <property type="term" value="P:mismatch repair"/>
    <property type="evidence" value="ECO:0007669"/>
    <property type="project" value="TreeGrafter"/>
</dbReference>
<dbReference type="CDD" id="cd07182">
    <property type="entry name" value="RNase_HII_bacteria_HII_like"/>
    <property type="match status" value="1"/>
</dbReference>
<dbReference type="FunFam" id="3.30.420.10:FF:000142">
    <property type="entry name" value="Ribonuclease HII"/>
    <property type="match status" value="1"/>
</dbReference>
<dbReference type="Gene3D" id="3.30.420.10">
    <property type="entry name" value="Ribonuclease H-like superfamily/Ribonuclease H"/>
    <property type="match status" value="1"/>
</dbReference>
<dbReference type="HAMAP" id="MF_00052_B">
    <property type="entry name" value="RNase_HII_B"/>
    <property type="match status" value="1"/>
</dbReference>
<dbReference type="InterPro" id="IPR022898">
    <property type="entry name" value="RNase_HII"/>
</dbReference>
<dbReference type="InterPro" id="IPR001352">
    <property type="entry name" value="RNase_HII/HIII"/>
</dbReference>
<dbReference type="InterPro" id="IPR024567">
    <property type="entry name" value="RNase_HII/HIII_dom"/>
</dbReference>
<dbReference type="InterPro" id="IPR012337">
    <property type="entry name" value="RNaseH-like_sf"/>
</dbReference>
<dbReference type="InterPro" id="IPR036397">
    <property type="entry name" value="RNaseH_sf"/>
</dbReference>
<dbReference type="NCBIfam" id="NF000594">
    <property type="entry name" value="PRK00015.1-1"/>
    <property type="match status" value="1"/>
</dbReference>
<dbReference type="NCBIfam" id="NF000595">
    <property type="entry name" value="PRK00015.1-3"/>
    <property type="match status" value="1"/>
</dbReference>
<dbReference type="PANTHER" id="PTHR10954">
    <property type="entry name" value="RIBONUCLEASE H2 SUBUNIT A"/>
    <property type="match status" value="1"/>
</dbReference>
<dbReference type="PANTHER" id="PTHR10954:SF18">
    <property type="entry name" value="RIBONUCLEASE HII"/>
    <property type="match status" value="1"/>
</dbReference>
<dbReference type="Pfam" id="PF01351">
    <property type="entry name" value="RNase_HII"/>
    <property type="match status" value="1"/>
</dbReference>
<dbReference type="SUPFAM" id="SSF53098">
    <property type="entry name" value="Ribonuclease H-like"/>
    <property type="match status" value="1"/>
</dbReference>
<dbReference type="PROSITE" id="PS51975">
    <property type="entry name" value="RNASE_H_2"/>
    <property type="match status" value="1"/>
</dbReference>
<comment type="function">
    <text evidence="1">Endonuclease that specifically degrades the RNA of RNA-DNA hybrids.</text>
</comment>
<comment type="catalytic activity">
    <reaction evidence="1">
        <text>Endonucleolytic cleavage to 5'-phosphomonoester.</text>
        <dbReference type="EC" id="3.1.26.4"/>
    </reaction>
</comment>
<comment type="cofactor">
    <cofactor evidence="1">
        <name>Mn(2+)</name>
        <dbReference type="ChEBI" id="CHEBI:29035"/>
    </cofactor>
    <cofactor evidence="1">
        <name>Mg(2+)</name>
        <dbReference type="ChEBI" id="CHEBI:18420"/>
    </cofactor>
    <text evidence="1">Manganese or magnesium. Binds 1 divalent metal ion per monomer in the absence of substrate. May bind a second metal ion after substrate binding.</text>
</comment>
<comment type="subcellular location">
    <subcellularLocation>
        <location evidence="1">Cytoplasm</location>
    </subcellularLocation>
</comment>
<comment type="similarity">
    <text evidence="1">Belongs to the RNase HII family.</text>
</comment>
<evidence type="ECO:0000255" key="1">
    <source>
        <dbReference type="HAMAP-Rule" id="MF_00052"/>
    </source>
</evidence>
<evidence type="ECO:0000255" key="2">
    <source>
        <dbReference type="PROSITE-ProRule" id="PRU01319"/>
    </source>
</evidence>